<evidence type="ECO:0000250" key="1"/>
<evidence type="ECO:0000269" key="2">
    <source>
    </source>
</evidence>
<evidence type="ECO:0000305" key="3"/>
<gene>
    <name type="primary">DHDH</name>
    <name type="synonym">2DD</name>
</gene>
<organism>
    <name type="scientific">Homo sapiens</name>
    <name type="common">Human</name>
    <dbReference type="NCBI Taxonomy" id="9606"/>
    <lineage>
        <taxon>Eukaryota</taxon>
        <taxon>Metazoa</taxon>
        <taxon>Chordata</taxon>
        <taxon>Craniata</taxon>
        <taxon>Vertebrata</taxon>
        <taxon>Euteleostomi</taxon>
        <taxon>Mammalia</taxon>
        <taxon>Eutheria</taxon>
        <taxon>Euarchontoglires</taxon>
        <taxon>Primates</taxon>
        <taxon>Haplorrhini</taxon>
        <taxon>Catarrhini</taxon>
        <taxon>Hominidae</taxon>
        <taxon>Homo</taxon>
    </lineage>
</organism>
<protein>
    <recommendedName>
        <fullName>Trans-1,2-dihydrobenzene-1,2-diol dehydrogenase</fullName>
        <ecNumber>1.3.1.20</ecNumber>
    </recommendedName>
    <alternativeName>
        <fullName>D-xylose 1-dehydrogenase</fullName>
    </alternativeName>
    <alternativeName>
        <fullName>D-xylose-NADP dehydrogenase</fullName>
        <ecNumber>1.1.1.179</ecNumber>
    </alternativeName>
    <alternativeName>
        <fullName>Dimeric dihydrodiol dehydrogenase</fullName>
    </alternativeName>
    <alternativeName>
        <fullName>Hum2DD</fullName>
    </alternativeName>
</protein>
<feature type="chain" id="PRO_0000315361" description="Trans-1,2-dihydrobenzene-1,2-diol dehydrogenase">
    <location>
        <begin position="1"/>
        <end position="334"/>
    </location>
</feature>
<feature type="site" description="May play an important role in coenzyme binding" evidence="1">
    <location>
        <position position="71"/>
    </location>
</feature>
<feature type="site" description="May play an important role in coenzyme binding" evidence="1">
    <location>
        <position position="79"/>
    </location>
</feature>
<feature type="site" description="May play an important role in coenzyme binding" evidence="1">
    <location>
        <position position="97"/>
    </location>
</feature>
<feature type="site" description="May play an important role for the adaptation of the alcohol substrate into the binding site" evidence="1">
    <location>
        <position position="176"/>
    </location>
</feature>
<feature type="site" description="May play an important role in catalytic activity" evidence="1">
    <location>
        <position position="180"/>
    </location>
</feature>
<feature type="sequence variant" id="VAR_038174" description="In dbSNP:rs10401800.">
    <original>A</original>
    <variation>P</variation>
    <location>
        <position position="2"/>
    </location>
</feature>
<feature type="sequence variant" id="VAR_038175" description="In dbSNP:rs2270941.">
    <original>S</original>
    <variation>N</variation>
    <location>
        <position position="66"/>
    </location>
</feature>
<feature type="sequence variant" id="VAR_038176" description="In dbSNP:rs35453148.">
    <original>V</original>
    <variation>M</variation>
    <location>
        <position position="200"/>
    </location>
</feature>
<feature type="sequence variant" id="VAR_038177" description="In dbSNP:rs11666105.">
    <original>V</original>
    <variation>A</variation>
    <location>
        <position position="247"/>
    </location>
</feature>
<feature type="sequence variant" id="VAR_038178" description="In dbSNP:rs3765148.">
    <original>G</original>
    <variation>R</variation>
    <location>
        <position position="282"/>
    </location>
</feature>
<accession>Q9UQ10</accession>
<dbReference type="EC" id="1.3.1.20"/>
<dbReference type="EC" id="1.1.1.179"/>
<dbReference type="EMBL" id="BC032730">
    <property type="protein sequence ID" value="AAH32730.1"/>
    <property type="molecule type" value="mRNA"/>
</dbReference>
<dbReference type="EMBL" id="AB021933">
    <property type="protein sequence ID" value="BAA83490.1"/>
    <property type="molecule type" value="mRNA"/>
</dbReference>
<dbReference type="EMBL" id="CH471177">
    <property type="protein sequence ID" value="EAW52414.1"/>
    <property type="molecule type" value="Genomic_DNA"/>
</dbReference>
<dbReference type="CCDS" id="CCDS12741.1"/>
<dbReference type="RefSeq" id="NP_055290.1">
    <property type="nucleotide sequence ID" value="NM_014475.4"/>
</dbReference>
<dbReference type="SMR" id="Q9UQ10"/>
<dbReference type="BioGRID" id="118118">
    <property type="interactions" value="71"/>
</dbReference>
<dbReference type="FunCoup" id="Q9UQ10">
    <property type="interactions" value="208"/>
</dbReference>
<dbReference type="IntAct" id="Q9UQ10">
    <property type="interactions" value="44"/>
</dbReference>
<dbReference type="STRING" id="9606.ENSP00000221403"/>
<dbReference type="PhosphoSitePlus" id="Q9UQ10"/>
<dbReference type="BioMuta" id="DHDH"/>
<dbReference type="DMDM" id="74735193"/>
<dbReference type="MassIVE" id="Q9UQ10"/>
<dbReference type="PaxDb" id="9606-ENSP00000221403"/>
<dbReference type="PeptideAtlas" id="Q9UQ10"/>
<dbReference type="ProteomicsDB" id="85489"/>
<dbReference type="Antibodypedia" id="31841">
    <property type="antibodies" value="163 antibodies from 25 providers"/>
</dbReference>
<dbReference type="DNASU" id="27294"/>
<dbReference type="Ensembl" id="ENST00000221403.7">
    <property type="protein sequence ID" value="ENSP00000221403.2"/>
    <property type="gene ID" value="ENSG00000104808.8"/>
</dbReference>
<dbReference type="GeneID" id="27294"/>
<dbReference type="KEGG" id="hsa:27294"/>
<dbReference type="MANE-Select" id="ENST00000221403.7">
    <property type="protein sequence ID" value="ENSP00000221403.2"/>
    <property type="RefSeq nucleotide sequence ID" value="NM_014475.4"/>
    <property type="RefSeq protein sequence ID" value="NP_055290.1"/>
</dbReference>
<dbReference type="UCSC" id="uc002ple.1">
    <property type="organism name" value="human"/>
</dbReference>
<dbReference type="AGR" id="HGNC:17887"/>
<dbReference type="CTD" id="27294"/>
<dbReference type="DisGeNET" id="27294"/>
<dbReference type="GeneCards" id="DHDH"/>
<dbReference type="HGNC" id="HGNC:17887">
    <property type="gene designation" value="DHDH"/>
</dbReference>
<dbReference type="HPA" id="ENSG00000104808">
    <property type="expression patterns" value="Group enriched (intestine, kidney)"/>
</dbReference>
<dbReference type="MIM" id="606377">
    <property type="type" value="gene"/>
</dbReference>
<dbReference type="neXtProt" id="NX_Q9UQ10"/>
<dbReference type="OpenTargets" id="ENSG00000104808"/>
<dbReference type="PharmGKB" id="PA27322"/>
<dbReference type="VEuPathDB" id="HostDB:ENSG00000104808"/>
<dbReference type="eggNOG" id="KOG2741">
    <property type="taxonomic scope" value="Eukaryota"/>
</dbReference>
<dbReference type="GeneTree" id="ENSGT00390000007946"/>
<dbReference type="HOGENOM" id="CLU_023194_7_2_1"/>
<dbReference type="InParanoid" id="Q9UQ10"/>
<dbReference type="OMA" id="AHETGKY"/>
<dbReference type="OrthoDB" id="2129491at2759"/>
<dbReference type="PAN-GO" id="Q9UQ10">
    <property type="GO annotations" value="2 GO annotations based on evolutionary models"/>
</dbReference>
<dbReference type="PhylomeDB" id="Q9UQ10"/>
<dbReference type="TreeFam" id="TF324504"/>
<dbReference type="PathwayCommons" id="Q9UQ10"/>
<dbReference type="SignaLink" id="Q9UQ10"/>
<dbReference type="BioGRID-ORCS" id="27294">
    <property type="hits" value="15 hits in 1152 CRISPR screens"/>
</dbReference>
<dbReference type="ChiTaRS" id="DHDH">
    <property type="organism name" value="human"/>
</dbReference>
<dbReference type="GenomeRNAi" id="27294"/>
<dbReference type="Pharos" id="Q9UQ10">
    <property type="development level" value="Tbio"/>
</dbReference>
<dbReference type="PRO" id="PR:Q9UQ10"/>
<dbReference type="Proteomes" id="UP000005640">
    <property type="component" value="Chromosome 19"/>
</dbReference>
<dbReference type="RNAct" id="Q9UQ10">
    <property type="molecule type" value="protein"/>
</dbReference>
<dbReference type="Bgee" id="ENSG00000104808">
    <property type="expression patterns" value="Expressed in kidney epithelium and 119 other cell types or tissues"/>
</dbReference>
<dbReference type="ExpressionAtlas" id="Q9UQ10">
    <property type="expression patterns" value="baseline and differential"/>
</dbReference>
<dbReference type="GO" id="GO:0047837">
    <property type="term" value="F:D-xylose 1-dehydrogenase (NADP+) activity"/>
    <property type="evidence" value="ECO:0000318"/>
    <property type="project" value="GO_Central"/>
</dbReference>
<dbReference type="GO" id="GO:0000166">
    <property type="term" value="F:nucleotide binding"/>
    <property type="evidence" value="ECO:0007669"/>
    <property type="project" value="InterPro"/>
</dbReference>
<dbReference type="GO" id="GO:0047115">
    <property type="term" value="F:trans-1,2-dihydrobenzene-1,2-diol dehydrogenase activity"/>
    <property type="evidence" value="ECO:0007669"/>
    <property type="project" value="UniProtKB-EC"/>
</dbReference>
<dbReference type="GO" id="GO:0042843">
    <property type="term" value="P:D-xylose catabolic process"/>
    <property type="evidence" value="ECO:0000318"/>
    <property type="project" value="GO_Central"/>
</dbReference>
<dbReference type="FunFam" id="3.30.360.10:FF:000031">
    <property type="entry name" value="Trans-1,2-dihydrobenzene-1,2-diol dehydrogenase"/>
    <property type="match status" value="1"/>
</dbReference>
<dbReference type="FunFam" id="3.40.50.720:FF:000269">
    <property type="entry name" value="Trans-1,2-dihydrobenzene-1,2-diol dehydrogenase"/>
    <property type="match status" value="1"/>
</dbReference>
<dbReference type="Gene3D" id="3.30.360.10">
    <property type="entry name" value="Dihydrodipicolinate Reductase, domain 2"/>
    <property type="match status" value="1"/>
</dbReference>
<dbReference type="Gene3D" id="3.40.50.720">
    <property type="entry name" value="NAD(P)-binding Rossmann-like Domain"/>
    <property type="match status" value="1"/>
</dbReference>
<dbReference type="InterPro" id="IPR000683">
    <property type="entry name" value="Gfo/Idh/MocA-like_OxRdtase_N"/>
</dbReference>
<dbReference type="InterPro" id="IPR050984">
    <property type="entry name" value="Gfo/Idh/MocA_domain"/>
</dbReference>
<dbReference type="InterPro" id="IPR055170">
    <property type="entry name" value="GFO_IDH_MocA-like_dom"/>
</dbReference>
<dbReference type="InterPro" id="IPR036291">
    <property type="entry name" value="NAD(P)-bd_dom_sf"/>
</dbReference>
<dbReference type="PANTHER" id="PTHR22604">
    <property type="entry name" value="OXIDOREDUCTASES"/>
    <property type="match status" value="1"/>
</dbReference>
<dbReference type="PANTHER" id="PTHR22604:SF105">
    <property type="entry name" value="TRANS-1,2-DIHYDROBENZENE-1,2-DIOL DEHYDROGENASE"/>
    <property type="match status" value="1"/>
</dbReference>
<dbReference type="Pfam" id="PF01408">
    <property type="entry name" value="GFO_IDH_MocA"/>
    <property type="match status" value="1"/>
</dbReference>
<dbReference type="Pfam" id="PF22725">
    <property type="entry name" value="GFO_IDH_MocA_C3"/>
    <property type="match status" value="1"/>
</dbReference>
<dbReference type="SUPFAM" id="SSF55347">
    <property type="entry name" value="Glyceraldehyde-3-phosphate dehydrogenase-like, C-terminal domain"/>
    <property type="match status" value="1"/>
</dbReference>
<dbReference type="SUPFAM" id="SSF51735">
    <property type="entry name" value="NAD(P)-binding Rossmann-fold domains"/>
    <property type="match status" value="1"/>
</dbReference>
<keyword id="KW-0521">NADP</keyword>
<keyword id="KW-0560">Oxidoreductase</keyword>
<keyword id="KW-1267">Proteomics identification</keyword>
<keyword id="KW-1185">Reference proteome</keyword>
<sequence>MALRWGIVSVGLISSDFTAVLQTLPRSEHQVVAVAARDLSRAKEFAQKHDIPKAYGSYEELAKDPSVEVAYIGTQHPQHKAAVMLCLAAGKAVLCEKPTGVNAAEVREMVAEARSRALFLMEAIWTRFFPASEALRSVLAQGTLGDLRVARAEFGKNLIHVPRAVDRAQAGGALLDIGIYCVQFTSMVFGGQKPEKISVVGRRHETGVDDTVTVLLQYPGEVHGSFTCSITVQLSNTASVSGTKGMVQLLNPCWCPTELVVKGEHKEFPLPPVPKDCNFDNGAGMSYEAKHVWECLRKGMKESPVIPLSESELLADILEEVRKAIGVTFPQDKR</sequence>
<name>DHDH_HUMAN</name>
<proteinExistence type="evidence at protein level"/>
<comment type="catalytic activity">
    <reaction>
        <text>(1R,2R)-1,2-dihydrobenzene-1,2-diol + NADP(+) = catechol + NADPH + H(+)</text>
        <dbReference type="Rhea" id="RHEA:16729"/>
        <dbReference type="ChEBI" id="CHEBI:10702"/>
        <dbReference type="ChEBI" id="CHEBI:15378"/>
        <dbReference type="ChEBI" id="CHEBI:18135"/>
        <dbReference type="ChEBI" id="CHEBI:57783"/>
        <dbReference type="ChEBI" id="CHEBI:58349"/>
        <dbReference type="EC" id="1.3.1.20"/>
    </reaction>
</comment>
<comment type="catalytic activity">
    <reaction>
        <text>D-xylose + NADP(+) = D-xylono-1,5-lactone + NADPH + H(+)</text>
        <dbReference type="Rhea" id="RHEA:22000"/>
        <dbReference type="ChEBI" id="CHEBI:15378"/>
        <dbReference type="ChEBI" id="CHEBI:15867"/>
        <dbReference type="ChEBI" id="CHEBI:53455"/>
        <dbReference type="ChEBI" id="CHEBI:57783"/>
        <dbReference type="ChEBI" id="CHEBI:58349"/>
        <dbReference type="EC" id="1.1.1.179"/>
    </reaction>
</comment>
<comment type="subunit">
    <text evidence="2">Homodimer.</text>
</comment>
<comment type="tissue specificity">
    <text evidence="2">Small intestine.</text>
</comment>
<comment type="similarity">
    <text evidence="3">Belongs to the Gfo/Idh/MocA family.</text>
</comment>
<reference key="1">
    <citation type="journal article" date="1999" name="Biochem. J.">
        <title>Cloning and sequencing of the cDNA species for mammalian dimeric dihydrodiol dehydrogenases.</title>
        <authorList>
            <person name="Arimitsu E."/>
            <person name="Aoki S."/>
            <person name="Ishikura S."/>
            <person name="Nakanishi K."/>
            <person name="Matsuura K."/>
            <person name="Hara A."/>
        </authorList>
    </citation>
    <scope>NUCLEOTIDE SEQUENCE [MRNA]</scope>
    <scope>SUBUNIT</scope>
    <scope>TISSUE SPECIFICITY</scope>
    <source>
        <tissue>Small intestine</tissue>
    </source>
</reference>
<reference key="2">
    <citation type="submission" date="2005-07" db="EMBL/GenBank/DDBJ databases">
        <authorList>
            <person name="Mural R.J."/>
            <person name="Istrail S."/>
            <person name="Sutton G.G."/>
            <person name="Florea L."/>
            <person name="Halpern A.L."/>
            <person name="Mobarry C.M."/>
            <person name="Lippert R."/>
            <person name="Walenz B."/>
            <person name="Shatkay H."/>
            <person name="Dew I."/>
            <person name="Miller J.R."/>
            <person name="Flanigan M.J."/>
            <person name="Edwards N.J."/>
            <person name="Bolanos R."/>
            <person name="Fasulo D."/>
            <person name="Halldorsson B.V."/>
            <person name="Hannenhalli S."/>
            <person name="Turner R."/>
            <person name="Yooseph S."/>
            <person name="Lu F."/>
            <person name="Nusskern D.R."/>
            <person name="Shue B.C."/>
            <person name="Zheng X.H."/>
            <person name="Zhong F."/>
            <person name="Delcher A.L."/>
            <person name="Huson D.H."/>
            <person name="Kravitz S.A."/>
            <person name="Mouchard L."/>
            <person name="Reinert K."/>
            <person name="Remington K.A."/>
            <person name="Clark A.G."/>
            <person name="Waterman M.S."/>
            <person name="Eichler E.E."/>
            <person name="Adams M.D."/>
            <person name="Hunkapiller M.W."/>
            <person name="Myers E.W."/>
            <person name="Venter J.C."/>
        </authorList>
    </citation>
    <scope>NUCLEOTIDE SEQUENCE [LARGE SCALE GENOMIC DNA]</scope>
</reference>
<reference key="3">
    <citation type="journal article" date="2004" name="Genome Res.">
        <title>The status, quality, and expansion of the NIH full-length cDNA project: the Mammalian Gene Collection (MGC).</title>
        <authorList>
            <consortium name="The MGC Project Team"/>
        </authorList>
    </citation>
    <scope>NUCLEOTIDE SEQUENCE [LARGE SCALE MRNA]</scope>
    <source>
        <tissue>Uterus</tissue>
    </source>
</reference>